<gene>
    <name evidence="1" type="primary">coaD</name>
    <name type="ordered locus">CKL_1386</name>
</gene>
<keyword id="KW-0067">ATP-binding</keyword>
<keyword id="KW-0173">Coenzyme A biosynthesis</keyword>
<keyword id="KW-0963">Cytoplasm</keyword>
<keyword id="KW-0460">Magnesium</keyword>
<keyword id="KW-0547">Nucleotide-binding</keyword>
<keyword id="KW-0548">Nucleotidyltransferase</keyword>
<keyword id="KW-1185">Reference proteome</keyword>
<keyword id="KW-0808">Transferase</keyword>
<organism>
    <name type="scientific">Clostridium kluyveri (strain ATCC 8527 / DSM 555 / NBRC 12016 / NCIMB 10680 / K1)</name>
    <dbReference type="NCBI Taxonomy" id="431943"/>
    <lineage>
        <taxon>Bacteria</taxon>
        <taxon>Bacillati</taxon>
        <taxon>Bacillota</taxon>
        <taxon>Clostridia</taxon>
        <taxon>Eubacteriales</taxon>
        <taxon>Clostridiaceae</taxon>
        <taxon>Clostridium</taxon>
    </lineage>
</organism>
<sequence>MSRAIYPGSFDPITNGHLDIIDRASKVFDELIVGVLVNPDKKGLFTVEERVELIERVVKDIPNVKVESFSGLLIDFMKKKQSQVIVKGLRAVSDFEYECQMSLMNKKLDPNIDTVFMMASAMNSFLSSSSVKQVAMFGGCIEGLVPEEVIIDIIKKFDKAYKNC</sequence>
<comment type="function">
    <text evidence="1">Reversibly transfers an adenylyl group from ATP to 4'-phosphopantetheine, yielding dephospho-CoA (dPCoA) and pyrophosphate.</text>
</comment>
<comment type="catalytic activity">
    <reaction evidence="1">
        <text>(R)-4'-phosphopantetheine + ATP + H(+) = 3'-dephospho-CoA + diphosphate</text>
        <dbReference type="Rhea" id="RHEA:19801"/>
        <dbReference type="ChEBI" id="CHEBI:15378"/>
        <dbReference type="ChEBI" id="CHEBI:30616"/>
        <dbReference type="ChEBI" id="CHEBI:33019"/>
        <dbReference type="ChEBI" id="CHEBI:57328"/>
        <dbReference type="ChEBI" id="CHEBI:61723"/>
        <dbReference type="EC" id="2.7.7.3"/>
    </reaction>
</comment>
<comment type="cofactor">
    <cofactor evidence="1">
        <name>Mg(2+)</name>
        <dbReference type="ChEBI" id="CHEBI:18420"/>
    </cofactor>
</comment>
<comment type="pathway">
    <text evidence="1">Cofactor biosynthesis; coenzyme A biosynthesis; CoA from (R)-pantothenate: step 4/5.</text>
</comment>
<comment type="subunit">
    <text evidence="1">Homohexamer.</text>
</comment>
<comment type="subcellular location">
    <subcellularLocation>
        <location evidence="1">Cytoplasm</location>
    </subcellularLocation>
</comment>
<comment type="similarity">
    <text evidence="1">Belongs to the bacterial CoaD family.</text>
</comment>
<name>COAD_CLOK5</name>
<protein>
    <recommendedName>
        <fullName evidence="1">Phosphopantetheine adenylyltransferase</fullName>
        <ecNumber evidence="1">2.7.7.3</ecNumber>
    </recommendedName>
    <alternativeName>
        <fullName evidence="1">Dephospho-CoA pyrophosphorylase</fullName>
    </alternativeName>
    <alternativeName>
        <fullName evidence="1">Pantetheine-phosphate adenylyltransferase</fullName>
        <shortName evidence="1">PPAT</shortName>
    </alternativeName>
</protein>
<dbReference type="EC" id="2.7.7.3" evidence="1"/>
<dbReference type="EMBL" id="CP000673">
    <property type="protein sequence ID" value="EDK33428.1"/>
    <property type="molecule type" value="Genomic_DNA"/>
</dbReference>
<dbReference type="RefSeq" id="WP_012101775.1">
    <property type="nucleotide sequence ID" value="NC_009706.1"/>
</dbReference>
<dbReference type="SMR" id="A5N7Z7"/>
<dbReference type="STRING" id="431943.CKL_1386"/>
<dbReference type="KEGG" id="ckl:CKL_1386"/>
<dbReference type="eggNOG" id="COG0669">
    <property type="taxonomic scope" value="Bacteria"/>
</dbReference>
<dbReference type="HOGENOM" id="CLU_100149_0_1_9"/>
<dbReference type="UniPathway" id="UPA00241">
    <property type="reaction ID" value="UER00355"/>
</dbReference>
<dbReference type="Proteomes" id="UP000002411">
    <property type="component" value="Chromosome"/>
</dbReference>
<dbReference type="GO" id="GO:0005737">
    <property type="term" value="C:cytoplasm"/>
    <property type="evidence" value="ECO:0007669"/>
    <property type="project" value="UniProtKB-SubCell"/>
</dbReference>
<dbReference type="GO" id="GO:0005524">
    <property type="term" value="F:ATP binding"/>
    <property type="evidence" value="ECO:0007669"/>
    <property type="project" value="UniProtKB-KW"/>
</dbReference>
<dbReference type="GO" id="GO:0004595">
    <property type="term" value="F:pantetheine-phosphate adenylyltransferase activity"/>
    <property type="evidence" value="ECO:0007669"/>
    <property type="project" value="UniProtKB-UniRule"/>
</dbReference>
<dbReference type="GO" id="GO:0015937">
    <property type="term" value="P:coenzyme A biosynthetic process"/>
    <property type="evidence" value="ECO:0007669"/>
    <property type="project" value="UniProtKB-UniRule"/>
</dbReference>
<dbReference type="CDD" id="cd02163">
    <property type="entry name" value="PPAT"/>
    <property type="match status" value="1"/>
</dbReference>
<dbReference type="Gene3D" id="3.40.50.620">
    <property type="entry name" value="HUPs"/>
    <property type="match status" value="1"/>
</dbReference>
<dbReference type="HAMAP" id="MF_00151">
    <property type="entry name" value="PPAT_bact"/>
    <property type="match status" value="1"/>
</dbReference>
<dbReference type="InterPro" id="IPR004821">
    <property type="entry name" value="Cyt_trans-like"/>
</dbReference>
<dbReference type="InterPro" id="IPR001980">
    <property type="entry name" value="PPAT"/>
</dbReference>
<dbReference type="InterPro" id="IPR014729">
    <property type="entry name" value="Rossmann-like_a/b/a_fold"/>
</dbReference>
<dbReference type="NCBIfam" id="TIGR01510">
    <property type="entry name" value="coaD_prev_kdtB"/>
    <property type="match status" value="1"/>
</dbReference>
<dbReference type="NCBIfam" id="TIGR00125">
    <property type="entry name" value="cyt_tran_rel"/>
    <property type="match status" value="1"/>
</dbReference>
<dbReference type="PANTHER" id="PTHR21342">
    <property type="entry name" value="PHOSPHOPANTETHEINE ADENYLYLTRANSFERASE"/>
    <property type="match status" value="1"/>
</dbReference>
<dbReference type="PANTHER" id="PTHR21342:SF1">
    <property type="entry name" value="PHOSPHOPANTETHEINE ADENYLYLTRANSFERASE"/>
    <property type="match status" value="1"/>
</dbReference>
<dbReference type="Pfam" id="PF01467">
    <property type="entry name" value="CTP_transf_like"/>
    <property type="match status" value="1"/>
</dbReference>
<dbReference type="PRINTS" id="PR01020">
    <property type="entry name" value="LPSBIOSNTHSS"/>
</dbReference>
<dbReference type="SUPFAM" id="SSF52374">
    <property type="entry name" value="Nucleotidylyl transferase"/>
    <property type="match status" value="1"/>
</dbReference>
<reference key="1">
    <citation type="journal article" date="2008" name="Proc. Natl. Acad. Sci. U.S.A.">
        <title>The genome of Clostridium kluyveri, a strict anaerobe with unique metabolic features.</title>
        <authorList>
            <person name="Seedorf H."/>
            <person name="Fricke W.F."/>
            <person name="Veith B."/>
            <person name="Brueggemann H."/>
            <person name="Liesegang H."/>
            <person name="Strittmatter A."/>
            <person name="Miethke M."/>
            <person name="Buckel W."/>
            <person name="Hinderberger J."/>
            <person name="Li F."/>
            <person name="Hagemeier C."/>
            <person name="Thauer R.K."/>
            <person name="Gottschalk G."/>
        </authorList>
    </citation>
    <scope>NUCLEOTIDE SEQUENCE [LARGE SCALE GENOMIC DNA]</scope>
    <source>
        <strain>ATCC 8527 / DSM 555 / NBRC 12016 / NCIMB 10680 / K1</strain>
    </source>
</reference>
<evidence type="ECO:0000255" key="1">
    <source>
        <dbReference type="HAMAP-Rule" id="MF_00151"/>
    </source>
</evidence>
<accession>A5N7Z7</accession>
<proteinExistence type="inferred from homology"/>
<feature type="chain" id="PRO_1000076758" description="Phosphopantetheine adenylyltransferase">
    <location>
        <begin position="1"/>
        <end position="164"/>
    </location>
</feature>
<feature type="binding site" evidence="1">
    <location>
        <begin position="9"/>
        <end position="10"/>
    </location>
    <ligand>
        <name>ATP</name>
        <dbReference type="ChEBI" id="CHEBI:30616"/>
    </ligand>
</feature>
<feature type="binding site" evidence="1">
    <location>
        <position position="9"/>
    </location>
    <ligand>
        <name>substrate</name>
    </ligand>
</feature>
<feature type="binding site" evidence="1">
    <location>
        <position position="17"/>
    </location>
    <ligand>
        <name>ATP</name>
        <dbReference type="ChEBI" id="CHEBI:30616"/>
    </ligand>
</feature>
<feature type="binding site" evidence="1">
    <location>
        <position position="41"/>
    </location>
    <ligand>
        <name>substrate</name>
    </ligand>
</feature>
<feature type="binding site" evidence="1">
    <location>
        <position position="73"/>
    </location>
    <ligand>
        <name>substrate</name>
    </ligand>
</feature>
<feature type="binding site" evidence="1">
    <location>
        <position position="87"/>
    </location>
    <ligand>
        <name>substrate</name>
    </ligand>
</feature>
<feature type="binding site" evidence="1">
    <location>
        <begin position="88"/>
        <end position="90"/>
    </location>
    <ligand>
        <name>ATP</name>
        <dbReference type="ChEBI" id="CHEBI:30616"/>
    </ligand>
</feature>
<feature type="binding site" evidence="1">
    <location>
        <position position="98"/>
    </location>
    <ligand>
        <name>ATP</name>
        <dbReference type="ChEBI" id="CHEBI:30616"/>
    </ligand>
</feature>
<feature type="binding site" evidence="1">
    <location>
        <begin position="123"/>
        <end position="129"/>
    </location>
    <ligand>
        <name>ATP</name>
        <dbReference type="ChEBI" id="CHEBI:30616"/>
    </ligand>
</feature>
<feature type="site" description="Transition state stabilizer" evidence="1">
    <location>
        <position position="17"/>
    </location>
</feature>